<reference key="1">
    <citation type="submission" date="2006-06" db="EMBL/GenBank/DDBJ databases">
        <authorList>
            <consortium name="NIH - Mammalian Gene Collection (MGC) project"/>
        </authorList>
    </citation>
    <scope>NUCLEOTIDE SEQUENCE [LARGE SCALE MRNA]</scope>
    <source>
        <strain>Hereford</strain>
        <tissue>Basal ganglia</tissue>
    </source>
</reference>
<reference key="2">
    <citation type="journal article" date="2001" name="Science">
        <title>Crystal structure of Arp2/3 complex.</title>
        <authorList>
            <person name="Robinson R.C."/>
            <person name="Turbedsky K."/>
            <person name="Kaiser D.A."/>
            <person name="Marchand J.-B."/>
            <person name="Higgs H.N."/>
            <person name="Choe S."/>
            <person name="Pollard T.D."/>
        </authorList>
    </citation>
    <scope>X-RAY CRYSTALLOGRAPHY (2.0 ANGSTROMS) OF ARP2/3 COMPLEX</scope>
</reference>
<reference key="3">
    <citation type="journal article" date="2004" name="Proc. Natl. Acad. Sci. U.S.A.">
        <title>Crystal structures of actin-related protein 2/3 complex with bound ATP or ADP.</title>
        <authorList>
            <person name="Nolen B.J."/>
            <person name="Littlefield R.S."/>
            <person name="Pollard T.D."/>
        </authorList>
    </citation>
    <scope>X-RAY CRYSTALLOGRAPHY (2.55 ANGSTROMS) OF ARP2/3 COMPLEX WITH BOUND ATP</scope>
</reference>
<keyword id="KW-0002">3D-structure</keyword>
<keyword id="KW-0007">Acetylation</keyword>
<keyword id="KW-0009">Actin-binding</keyword>
<keyword id="KW-0966">Cell projection</keyword>
<keyword id="KW-0963">Cytoplasm</keyword>
<keyword id="KW-0206">Cytoskeleton</keyword>
<keyword id="KW-0539">Nucleus</keyword>
<keyword id="KW-1185">Reference proteome</keyword>
<accession>Q148J6</accession>
<dbReference type="EMBL" id="BC118263">
    <property type="protein sequence ID" value="AAI18264.1"/>
    <property type="molecule type" value="mRNA"/>
</dbReference>
<dbReference type="RefSeq" id="NP_001069631.1">
    <property type="nucleotide sequence ID" value="NM_001076163.1"/>
</dbReference>
<dbReference type="PDB" id="1K8K">
    <property type="method" value="X-ray"/>
    <property type="resolution" value="2.00 A"/>
    <property type="chains" value="F=1-168"/>
</dbReference>
<dbReference type="PDB" id="1TYQ">
    <property type="method" value="X-ray"/>
    <property type="resolution" value="2.55 A"/>
    <property type="chains" value="F=1-168"/>
</dbReference>
<dbReference type="PDB" id="1U2V">
    <property type="method" value="X-ray"/>
    <property type="resolution" value="2.55 A"/>
    <property type="chains" value="F=1-168"/>
</dbReference>
<dbReference type="PDB" id="2P9I">
    <property type="method" value="X-ray"/>
    <property type="resolution" value="2.46 A"/>
    <property type="chains" value="F=1-168"/>
</dbReference>
<dbReference type="PDB" id="2P9K">
    <property type="method" value="X-ray"/>
    <property type="resolution" value="2.59 A"/>
    <property type="chains" value="F=1-168"/>
</dbReference>
<dbReference type="PDB" id="2P9L">
    <property type="method" value="X-ray"/>
    <property type="resolution" value="2.65 A"/>
    <property type="chains" value="F=1-168"/>
</dbReference>
<dbReference type="PDB" id="2P9N">
    <property type="method" value="X-ray"/>
    <property type="resolution" value="2.85 A"/>
    <property type="chains" value="F=1-168"/>
</dbReference>
<dbReference type="PDB" id="2P9P">
    <property type="method" value="X-ray"/>
    <property type="resolution" value="2.90 A"/>
    <property type="chains" value="F=1-168"/>
</dbReference>
<dbReference type="PDB" id="2P9S">
    <property type="method" value="X-ray"/>
    <property type="resolution" value="2.68 A"/>
    <property type="chains" value="F=1-168"/>
</dbReference>
<dbReference type="PDB" id="2P9U">
    <property type="method" value="X-ray"/>
    <property type="resolution" value="2.75 A"/>
    <property type="chains" value="F=1-168"/>
</dbReference>
<dbReference type="PDB" id="3DXK">
    <property type="method" value="X-ray"/>
    <property type="resolution" value="2.70 A"/>
    <property type="chains" value="F=1-168"/>
</dbReference>
<dbReference type="PDB" id="3DXM">
    <property type="method" value="X-ray"/>
    <property type="resolution" value="2.85 A"/>
    <property type="chains" value="F=1-168"/>
</dbReference>
<dbReference type="PDB" id="3RSE">
    <property type="method" value="X-ray"/>
    <property type="resolution" value="2.65 A"/>
    <property type="chains" value="F=1-168"/>
</dbReference>
<dbReference type="PDB" id="3UKR">
    <property type="method" value="X-ray"/>
    <property type="resolution" value="2.48 A"/>
    <property type="chains" value="F=1-168"/>
</dbReference>
<dbReference type="PDB" id="3UKU">
    <property type="method" value="X-ray"/>
    <property type="resolution" value="2.75 A"/>
    <property type="chains" value="F=1-168"/>
</dbReference>
<dbReference type="PDB" id="3ULE">
    <property type="method" value="X-ray"/>
    <property type="resolution" value="2.50 A"/>
    <property type="chains" value="F=1-168"/>
</dbReference>
<dbReference type="PDB" id="4JD2">
    <property type="method" value="X-ray"/>
    <property type="resolution" value="3.08 A"/>
    <property type="chains" value="F=1-168"/>
</dbReference>
<dbReference type="PDB" id="4XEI">
    <property type="method" value="X-ray"/>
    <property type="resolution" value="3.87 A"/>
    <property type="chains" value="F=1-168"/>
</dbReference>
<dbReference type="PDB" id="4XF2">
    <property type="method" value="X-ray"/>
    <property type="resolution" value="5.00 A"/>
    <property type="chains" value="F/Y=1-168"/>
</dbReference>
<dbReference type="PDB" id="6DEC">
    <property type="method" value="X-ray"/>
    <property type="resolution" value="4.60 A"/>
    <property type="chains" value="F/N=1-168"/>
</dbReference>
<dbReference type="PDB" id="7JPN">
    <property type="method" value="EM"/>
    <property type="resolution" value="3.24 A"/>
    <property type="chains" value="F=1-168"/>
</dbReference>
<dbReference type="PDB" id="7T5Q">
    <property type="method" value="EM"/>
    <property type="resolution" value="3.40 A"/>
    <property type="chains" value="F=1-168"/>
</dbReference>
<dbReference type="PDB" id="7TPT">
    <property type="method" value="EM"/>
    <property type="resolution" value="3.90 A"/>
    <property type="chains" value="F=1-168"/>
</dbReference>
<dbReference type="PDB" id="8TAH">
    <property type="method" value="EM"/>
    <property type="resolution" value="2.89 A"/>
    <property type="chains" value="F=1-168"/>
</dbReference>
<dbReference type="PDB" id="9DLX">
    <property type="method" value="EM"/>
    <property type="resolution" value="2.91 A"/>
    <property type="chains" value="F=2-168"/>
</dbReference>
<dbReference type="PDB" id="9DLZ">
    <property type="method" value="EM"/>
    <property type="resolution" value="3.40 A"/>
    <property type="chains" value="F=2-168"/>
</dbReference>
<dbReference type="PDBsum" id="1K8K"/>
<dbReference type="PDBsum" id="1TYQ"/>
<dbReference type="PDBsum" id="1U2V"/>
<dbReference type="PDBsum" id="2P9I"/>
<dbReference type="PDBsum" id="2P9K"/>
<dbReference type="PDBsum" id="2P9L"/>
<dbReference type="PDBsum" id="2P9N"/>
<dbReference type="PDBsum" id="2P9P"/>
<dbReference type="PDBsum" id="2P9S"/>
<dbReference type="PDBsum" id="2P9U"/>
<dbReference type="PDBsum" id="3DXK"/>
<dbReference type="PDBsum" id="3DXM"/>
<dbReference type="PDBsum" id="3RSE"/>
<dbReference type="PDBsum" id="3UKR"/>
<dbReference type="PDBsum" id="3UKU"/>
<dbReference type="PDBsum" id="3ULE"/>
<dbReference type="PDBsum" id="4JD2"/>
<dbReference type="PDBsum" id="4XEI"/>
<dbReference type="PDBsum" id="4XF2"/>
<dbReference type="PDBsum" id="6DEC"/>
<dbReference type="PDBsum" id="7JPN"/>
<dbReference type="PDBsum" id="7T5Q"/>
<dbReference type="PDBsum" id="7TPT"/>
<dbReference type="PDBsum" id="8TAH"/>
<dbReference type="PDBsum" id="9DLX"/>
<dbReference type="PDBsum" id="9DLZ"/>
<dbReference type="EMDB" id="EMD-22416"/>
<dbReference type="EMDB" id="EMD-25707"/>
<dbReference type="EMDB" id="EMD-26063"/>
<dbReference type="EMDB" id="EMD-41135"/>
<dbReference type="EMDB" id="EMD-46992"/>
<dbReference type="EMDB" id="EMD-46993"/>
<dbReference type="SMR" id="Q148J6"/>
<dbReference type="DIP" id="DIP-29794N"/>
<dbReference type="FunCoup" id="Q148J6">
    <property type="interactions" value="3427"/>
</dbReference>
<dbReference type="IntAct" id="Q148J6">
    <property type="interactions" value="2"/>
</dbReference>
<dbReference type="STRING" id="9913.ENSBTAP00000010469"/>
<dbReference type="PaxDb" id="9913-ENSBTAP00000010469"/>
<dbReference type="Ensembl" id="ENSBTAT00000010469.5">
    <property type="protein sequence ID" value="ENSBTAP00000010469.5"/>
    <property type="gene ID" value="ENSBTAG00000007964.5"/>
</dbReference>
<dbReference type="GeneID" id="539459"/>
<dbReference type="KEGG" id="bta:539459"/>
<dbReference type="CTD" id="10093"/>
<dbReference type="VEuPathDB" id="HostDB:ENSBTAG00000007964"/>
<dbReference type="eggNOG" id="KOG1876">
    <property type="taxonomic scope" value="Eukaryota"/>
</dbReference>
<dbReference type="GeneTree" id="ENSGT00390000016233"/>
<dbReference type="HOGENOM" id="CLU_084855_1_0_1"/>
<dbReference type="InParanoid" id="Q148J6"/>
<dbReference type="OMA" id="EAYLGEF"/>
<dbReference type="OrthoDB" id="336240at2759"/>
<dbReference type="TreeFam" id="TF105621"/>
<dbReference type="Reactome" id="R-BTA-2029482">
    <property type="pathway name" value="Regulation of actin dynamics for phagocytic cup formation"/>
</dbReference>
<dbReference type="Reactome" id="R-BTA-3928662">
    <property type="pathway name" value="EPHB-mediated forward signaling"/>
</dbReference>
<dbReference type="Reactome" id="R-BTA-5663213">
    <property type="pathway name" value="RHO GTPases Activate WASPs and WAVEs"/>
</dbReference>
<dbReference type="Reactome" id="R-BTA-8856828">
    <property type="pathway name" value="Clathrin-mediated endocytosis"/>
</dbReference>
<dbReference type="EvolutionaryTrace" id="Q148J6"/>
<dbReference type="Proteomes" id="UP000009136">
    <property type="component" value="Chromosome 22"/>
</dbReference>
<dbReference type="Bgee" id="ENSBTAG00000007964">
    <property type="expression patterns" value="Expressed in monocyte and 102 other cell types or tissues"/>
</dbReference>
<dbReference type="GO" id="GO:0005885">
    <property type="term" value="C:Arp2/3 protein complex"/>
    <property type="evidence" value="ECO:0000250"/>
    <property type="project" value="UniProtKB"/>
</dbReference>
<dbReference type="GO" id="GO:0042995">
    <property type="term" value="C:cell projection"/>
    <property type="evidence" value="ECO:0007669"/>
    <property type="project" value="UniProtKB-SubCell"/>
</dbReference>
<dbReference type="GO" id="GO:0005829">
    <property type="term" value="C:cytosol"/>
    <property type="evidence" value="ECO:0000304"/>
    <property type="project" value="Reactome"/>
</dbReference>
<dbReference type="GO" id="GO:0005634">
    <property type="term" value="C:nucleus"/>
    <property type="evidence" value="ECO:0000250"/>
    <property type="project" value="UniProtKB"/>
</dbReference>
<dbReference type="GO" id="GO:0035861">
    <property type="term" value="C:site of double-strand break"/>
    <property type="evidence" value="ECO:0000250"/>
    <property type="project" value="UniProtKB"/>
</dbReference>
<dbReference type="GO" id="GO:0051015">
    <property type="term" value="F:actin filament binding"/>
    <property type="evidence" value="ECO:0000318"/>
    <property type="project" value="GO_Central"/>
</dbReference>
<dbReference type="GO" id="GO:0030041">
    <property type="term" value="P:actin filament polymerization"/>
    <property type="evidence" value="ECO:0007669"/>
    <property type="project" value="InterPro"/>
</dbReference>
<dbReference type="GO" id="GO:0034314">
    <property type="term" value="P:Arp2/3 complex-mediated actin nucleation"/>
    <property type="evidence" value="ECO:0000318"/>
    <property type="project" value="GO_Central"/>
</dbReference>
<dbReference type="FunFam" id="3.30.1460.20:FF:000001">
    <property type="entry name" value="Actin-related protein 2/3 complex subunit 4"/>
    <property type="match status" value="1"/>
</dbReference>
<dbReference type="Gene3D" id="3.30.1460.20">
    <property type="match status" value="1"/>
</dbReference>
<dbReference type="InterPro" id="IPR034666">
    <property type="entry name" value="ARPC2/4"/>
</dbReference>
<dbReference type="InterPro" id="IPR008384">
    <property type="entry name" value="ARPC4"/>
</dbReference>
<dbReference type="PANTHER" id="PTHR22629:SF0">
    <property type="entry name" value="ACTIN-RELATED PROTEIN 2_3 COMPLEX SUBUNIT 4"/>
    <property type="match status" value="1"/>
</dbReference>
<dbReference type="PANTHER" id="PTHR22629">
    <property type="entry name" value="ARP2/3 COMPLEX 20 KD SUBUNIT"/>
    <property type="match status" value="1"/>
</dbReference>
<dbReference type="Pfam" id="PF05856">
    <property type="entry name" value="ARPC4"/>
    <property type="match status" value="1"/>
</dbReference>
<dbReference type="PIRSF" id="PIRSF039100">
    <property type="entry name" value="ARPC4"/>
    <property type="match status" value="1"/>
</dbReference>
<dbReference type="SUPFAM" id="SSF69645">
    <property type="entry name" value="Arp2/3 complex subunits"/>
    <property type="match status" value="1"/>
</dbReference>
<evidence type="ECO:0000250" key="1">
    <source>
        <dbReference type="UniProtKB" id="P59998"/>
    </source>
</evidence>
<evidence type="ECO:0000269" key="2">
    <source>
    </source>
</evidence>
<evidence type="ECO:0000269" key="3">
    <source>
    </source>
</evidence>
<evidence type="ECO:0000305" key="4"/>
<evidence type="ECO:0007829" key="5">
    <source>
        <dbReference type="PDB" id="1K8K"/>
    </source>
</evidence>
<evidence type="ECO:0007829" key="6">
    <source>
        <dbReference type="PDB" id="3UKR"/>
    </source>
</evidence>
<gene>
    <name type="primary">ARPC4</name>
</gene>
<feature type="initiator methionine" description="Removed" evidence="1">
    <location>
        <position position="1"/>
    </location>
</feature>
<feature type="chain" id="PRO_0000269565" description="Actin-related protein 2/3 complex subunit 4">
    <location>
        <begin position="2"/>
        <end position="168"/>
    </location>
</feature>
<feature type="modified residue" description="N-acetylthreonine" evidence="1">
    <location>
        <position position="2"/>
    </location>
</feature>
<feature type="helix" evidence="5">
    <location>
        <begin position="5"/>
        <end position="19"/>
    </location>
</feature>
<feature type="strand" evidence="5">
    <location>
        <begin position="28"/>
        <end position="30"/>
    </location>
</feature>
<feature type="helix" evidence="5">
    <location>
        <begin position="37"/>
        <end position="40"/>
    </location>
</feature>
<feature type="helix" evidence="5">
    <location>
        <begin position="44"/>
        <end position="46"/>
    </location>
</feature>
<feature type="strand" evidence="5">
    <location>
        <begin position="51"/>
        <end position="58"/>
    </location>
</feature>
<feature type="strand" evidence="5">
    <location>
        <begin position="60"/>
        <end position="75"/>
    </location>
</feature>
<feature type="helix" evidence="5">
    <location>
        <begin position="81"/>
        <end position="96"/>
    </location>
</feature>
<feature type="turn" evidence="5">
    <location>
        <begin position="97"/>
        <end position="100"/>
    </location>
</feature>
<feature type="strand" evidence="6">
    <location>
        <begin position="102"/>
        <end position="104"/>
    </location>
</feature>
<feature type="strand" evidence="5">
    <location>
        <begin position="113"/>
        <end position="119"/>
    </location>
</feature>
<feature type="helix" evidence="5">
    <location>
        <begin position="120"/>
        <end position="125"/>
    </location>
</feature>
<feature type="helix" evidence="5">
    <location>
        <begin position="128"/>
        <end position="165"/>
    </location>
</feature>
<protein>
    <recommendedName>
        <fullName>Actin-related protein 2/3 complex subunit 4</fullName>
    </recommendedName>
    <alternativeName>
        <fullName>Arp2/3 complex 20 kDa subunit</fullName>
        <shortName>p20-ARC</shortName>
    </alternativeName>
</protein>
<organism>
    <name type="scientific">Bos taurus</name>
    <name type="common">Bovine</name>
    <dbReference type="NCBI Taxonomy" id="9913"/>
    <lineage>
        <taxon>Eukaryota</taxon>
        <taxon>Metazoa</taxon>
        <taxon>Chordata</taxon>
        <taxon>Craniata</taxon>
        <taxon>Vertebrata</taxon>
        <taxon>Euteleostomi</taxon>
        <taxon>Mammalia</taxon>
        <taxon>Eutheria</taxon>
        <taxon>Laurasiatheria</taxon>
        <taxon>Artiodactyla</taxon>
        <taxon>Ruminantia</taxon>
        <taxon>Pecora</taxon>
        <taxon>Bovidae</taxon>
        <taxon>Bovinae</taxon>
        <taxon>Bos</taxon>
    </lineage>
</organism>
<sequence>MTATLRPYLSAVRATLQAALCLENFSSQVVERHNKPEVEVRSSKELLLQPVTISRNEKEKVLIEGSINSVRVSIAVKQADEIEKILCHKFMRFMMMRAENFFILRRKPVEGYDISFLITNFHTEQMYKHKLVDFVIHFMEEIDKEISEMKLSVNARARIVAEEFLKNF</sequence>
<comment type="function">
    <text evidence="1">Actin-binding component of the Arp2/3 complex, a multiprotein complex that mediates actin polymerization upon stimulation by nucleation-promoting factor (NPF). The Arp2/3 complex mediates the formation of branched actin networks in the cytoplasm, providing the force for cell motility. In addition to its role in the cytoplasmic cytoskeleton, the Arp2/3 complex also promotes actin polymerization in the nucleus, thereby regulating gene transcription and repair of damaged DNA. The Arp2/3 complex promotes homologous recombination (HR) repair in response to DNA damage by promoting nuclear actin polymerization, leading to drive motility of double-strand breaks (DSBs).</text>
</comment>
<comment type="subunit">
    <text evidence="2 3">Component of the Arp2/3 complex composed of ACTR2/ARP2, ACTR3/ARP3, ARPC1B/p41-ARC, ARPC2/p34-ARC, ARPC3/p21-ARC, ARPC4/p20-ARC and ARPC5/p16-ARC.</text>
</comment>
<comment type="subcellular location">
    <subcellularLocation>
        <location evidence="1">Cytoplasm</location>
        <location evidence="1">Cytoskeleton</location>
    </subcellularLocation>
    <subcellularLocation>
        <location evidence="1">Cell projection</location>
    </subcellularLocation>
    <subcellularLocation>
        <location evidence="1">Nucleus</location>
    </subcellularLocation>
</comment>
<comment type="similarity">
    <text evidence="4">Belongs to the ARPC4 family.</text>
</comment>
<proteinExistence type="evidence at protein level"/>
<name>ARPC4_BOVIN</name>